<reference key="1">
    <citation type="journal article" date="2009" name="Genome Res.">
        <title>Whole genome sequence of Desulfovibrio magneticus strain RS-1 revealed common gene clusters in magnetotactic bacteria.</title>
        <authorList>
            <person name="Nakazawa H."/>
            <person name="Arakaki A."/>
            <person name="Narita-Yamada S."/>
            <person name="Yashiro I."/>
            <person name="Jinno K."/>
            <person name="Aoki N."/>
            <person name="Tsuruyama A."/>
            <person name="Okamura Y."/>
            <person name="Tanikawa S."/>
            <person name="Fujita N."/>
            <person name="Takeyama H."/>
            <person name="Matsunaga T."/>
        </authorList>
    </citation>
    <scope>NUCLEOTIDE SEQUENCE [LARGE SCALE GENOMIC DNA]</scope>
    <source>
        <strain>ATCC 700980 / DSM 13731 / RS-1</strain>
    </source>
</reference>
<dbReference type="EC" id="1.1.1.94" evidence="1"/>
<dbReference type="EMBL" id="AP010904">
    <property type="protein sequence ID" value="BAH74674.1"/>
    <property type="molecule type" value="Genomic_DNA"/>
</dbReference>
<dbReference type="RefSeq" id="WP_015859898.1">
    <property type="nucleotide sequence ID" value="NC_012796.1"/>
</dbReference>
<dbReference type="SMR" id="C4XLT6"/>
<dbReference type="STRING" id="573370.DMR_11830"/>
<dbReference type="KEGG" id="dma:DMR_11830"/>
<dbReference type="eggNOG" id="COG0240">
    <property type="taxonomic scope" value="Bacteria"/>
</dbReference>
<dbReference type="HOGENOM" id="CLU_033449_0_2_7"/>
<dbReference type="OrthoDB" id="9812273at2"/>
<dbReference type="UniPathway" id="UPA00940"/>
<dbReference type="Proteomes" id="UP000009071">
    <property type="component" value="Chromosome"/>
</dbReference>
<dbReference type="GO" id="GO:0005829">
    <property type="term" value="C:cytosol"/>
    <property type="evidence" value="ECO:0007669"/>
    <property type="project" value="TreeGrafter"/>
</dbReference>
<dbReference type="GO" id="GO:0047952">
    <property type="term" value="F:glycerol-3-phosphate dehydrogenase [NAD(P)+] activity"/>
    <property type="evidence" value="ECO:0007669"/>
    <property type="project" value="UniProtKB-UniRule"/>
</dbReference>
<dbReference type="GO" id="GO:0051287">
    <property type="term" value="F:NAD binding"/>
    <property type="evidence" value="ECO:0007669"/>
    <property type="project" value="InterPro"/>
</dbReference>
<dbReference type="GO" id="GO:0005975">
    <property type="term" value="P:carbohydrate metabolic process"/>
    <property type="evidence" value="ECO:0007669"/>
    <property type="project" value="InterPro"/>
</dbReference>
<dbReference type="GO" id="GO:0046167">
    <property type="term" value="P:glycerol-3-phosphate biosynthetic process"/>
    <property type="evidence" value="ECO:0007669"/>
    <property type="project" value="UniProtKB-UniRule"/>
</dbReference>
<dbReference type="GO" id="GO:0046168">
    <property type="term" value="P:glycerol-3-phosphate catabolic process"/>
    <property type="evidence" value="ECO:0007669"/>
    <property type="project" value="InterPro"/>
</dbReference>
<dbReference type="GO" id="GO:0006650">
    <property type="term" value="P:glycerophospholipid metabolic process"/>
    <property type="evidence" value="ECO:0007669"/>
    <property type="project" value="UniProtKB-UniRule"/>
</dbReference>
<dbReference type="GO" id="GO:0008654">
    <property type="term" value="P:phospholipid biosynthetic process"/>
    <property type="evidence" value="ECO:0007669"/>
    <property type="project" value="UniProtKB-KW"/>
</dbReference>
<dbReference type="FunFam" id="1.10.1040.10:FF:000001">
    <property type="entry name" value="Glycerol-3-phosphate dehydrogenase [NAD(P)+]"/>
    <property type="match status" value="1"/>
</dbReference>
<dbReference type="FunFam" id="3.40.50.720:FF:000019">
    <property type="entry name" value="Glycerol-3-phosphate dehydrogenase [NAD(P)+]"/>
    <property type="match status" value="1"/>
</dbReference>
<dbReference type="Gene3D" id="1.10.1040.10">
    <property type="entry name" value="N-(1-d-carboxylethyl)-l-norvaline Dehydrogenase, domain 2"/>
    <property type="match status" value="1"/>
</dbReference>
<dbReference type="Gene3D" id="3.40.50.720">
    <property type="entry name" value="NAD(P)-binding Rossmann-like Domain"/>
    <property type="match status" value="1"/>
</dbReference>
<dbReference type="HAMAP" id="MF_00394">
    <property type="entry name" value="NAD_Glyc3P_dehydrog"/>
    <property type="match status" value="1"/>
</dbReference>
<dbReference type="InterPro" id="IPR008927">
    <property type="entry name" value="6-PGluconate_DH-like_C_sf"/>
</dbReference>
<dbReference type="InterPro" id="IPR013328">
    <property type="entry name" value="6PGD_dom2"/>
</dbReference>
<dbReference type="InterPro" id="IPR006168">
    <property type="entry name" value="G3P_DH_NAD-dep"/>
</dbReference>
<dbReference type="InterPro" id="IPR006109">
    <property type="entry name" value="G3P_DH_NAD-dep_C"/>
</dbReference>
<dbReference type="InterPro" id="IPR011128">
    <property type="entry name" value="G3P_DH_NAD-dep_N"/>
</dbReference>
<dbReference type="InterPro" id="IPR036291">
    <property type="entry name" value="NAD(P)-bd_dom_sf"/>
</dbReference>
<dbReference type="NCBIfam" id="NF000940">
    <property type="entry name" value="PRK00094.1-2"/>
    <property type="match status" value="1"/>
</dbReference>
<dbReference type="NCBIfam" id="NF000942">
    <property type="entry name" value="PRK00094.1-4"/>
    <property type="match status" value="1"/>
</dbReference>
<dbReference type="PANTHER" id="PTHR11728">
    <property type="entry name" value="GLYCEROL-3-PHOSPHATE DEHYDROGENASE"/>
    <property type="match status" value="1"/>
</dbReference>
<dbReference type="PANTHER" id="PTHR11728:SF1">
    <property type="entry name" value="GLYCEROL-3-PHOSPHATE DEHYDROGENASE [NAD(+)] 2, CHLOROPLASTIC"/>
    <property type="match status" value="1"/>
</dbReference>
<dbReference type="Pfam" id="PF07479">
    <property type="entry name" value="NAD_Gly3P_dh_C"/>
    <property type="match status" value="1"/>
</dbReference>
<dbReference type="Pfam" id="PF01210">
    <property type="entry name" value="NAD_Gly3P_dh_N"/>
    <property type="match status" value="1"/>
</dbReference>
<dbReference type="PIRSF" id="PIRSF000114">
    <property type="entry name" value="Glycerol-3-P_dh"/>
    <property type="match status" value="1"/>
</dbReference>
<dbReference type="PRINTS" id="PR00077">
    <property type="entry name" value="GPDHDRGNASE"/>
</dbReference>
<dbReference type="SUPFAM" id="SSF48179">
    <property type="entry name" value="6-phosphogluconate dehydrogenase C-terminal domain-like"/>
    <property type="match status" value="1"/>
</dbReference>
<dbReference type="SUPFAM" id="SSF51735">
    <property type="entry name" value="NAD(P)-binding Rossmann-fold domains"/>
    <property type="match status" value="1"/>
</dbReference>
<dbReference type="PROSITE" id="PS00957">
    <property type="entry name" value="NAD_G3PDH"/>
    <property type="match status" value="1"/>
</dbReference>
<sequence length="330" mass="35716">MKIAVIGGGSWGTTLADLAAKKGLDARLWVREQAVMNEIRSSRENSWYLPGRKLSDQLEVSTDPAAVAEGVSHFVFAVPCQFIRAAYQRFIKYLPKNAVVICASKGIELDTLMTMSQVCQDALASIKPRFAMLSGPSFAYEVIREMPTAVTLACKDKKAAKDVQEALSTPYFRIYTTTDVRGVELGGAIKNIVAIAAGVADGLGFGGDARAALITRGLHEMSRLGKAMGGDRQTFMGLSGMGDLVLTCTGDLSRNRQVGLRLAKGQKLLDILADMKMVAEGVKTAEAVHALGQKLGVEMPITEQVYAILYKDKDPSKAVYELMTRDLKDE</sequence>
<proteinExistence type="inferred from homology"/>
<evidence type="ECO:0000255" key="1">
    <source>
        <dbReference type="HAMAP-Rule" id="MF_00394"/>
    </source>
</evidence>
<protein>
    <recommendedName>
        <fullName evidence="1">Glycerol-3-phosphate dehydrogenase [NAD(P)+]</fullName>
        <ecNumber evidence="1">1.1.1.94</ecNumber>
    </recommendedName>
    <alternativeName>
        <fullName evidence="1">NAD(P)(+)-dependent glycerol-3-phosphate dehydrogenase</fullName>
    </alternativeName>
    <alternativeName>
        <fullName evidence="1">NAD(P)H-dependent dihydroxyacetone-phosphate reductase</fullName>
    </alternativeName>
</protein>
<feature type="chain" id="PRO_1000205856" description="Glycerol-3-phosphate dehydrogenase [NAD(P)+]">
    <location>
        <begin position="1"/>
        <end position="330"/>
    </location>
</feature>
<feature type="active site" description="Proton acceptor" evidence="1">
    <location>
        <position position="190"/>
    </location>
</feature>
<feature type="binding site" evidence="1">
    <location>
        <position position="10"/>
    </location>
    <ligand>
        <name>NADPH</name>
        <dbReference type="ChEBI" id="CHEBI:57783"/>
    </ligand>
</feature>
<feature type="binding site" evidence="1">
    <location>
        <position position="11"/>
    </location>
    <ligand>
        <name>NADPH</name>
        <dbReference type="ChEBI" id="CHEBI:57783"/>
    </ligand>
</feature>
<feature type="binding site" evidence="1">
    <location>
        <position position="31"/>
    </location>
    <ligand>
        <name>NADPH</name>
        <dbReference type="ChEBI" id="CHEBI:57783"/>
    </ligand>
</feature>
<feature type="binding site" evidence="1">
    <location>
        <position position="105"/>
    </location>
    <ligand>
        <name>NADPH</name>
        <dbReference type="ChEBI" id="CHEBI:57783"/>
    </ligand>
</feature>
<feature type="binding site" evidence="1">
    <location>
        <position position="105"/>
    </location>
    <ligand>
        <name>sn-glycerol 3-phosphate</name>
        <dbReference type="ChEBI" id="CHEBI:57597"/>
    </ligand>
</feature>
<feature type="binding site" evidence="1">
    <location>
        <position position="135"/>
    </location>
    <ligand>
        <name>sn-glycerol 3-phosphate</name>
        <dbReference type="ChEBI" id="CHEBI:57597"/>
    </ligand>
</feature>
<feature type="binding site" evidence="1">
    <location>
        <position position="137"/>
    </location>
    <ligand>
        <name>sn-glycerol 3-phosphate</name>
        <dbReference type="ChEBI" id="CHEBI:57597"/>
    </ligand>
</feature>
<feature type="binding site" evidence="1">
    <location>
        <position position="139"/>
    </location>
    <ligand>
        <name>NADPH</name>
        <dbReference type="ChEBI" id="CHEBI:57783"/>
    </ligand>
</feature>
<feature type="binding site" evidence="1">
    <location>
        <position position="190"/>
    </location>
    <ligand>
        <name>sn-glycerol 3-phosphate</name>
        <dbReference type="ChEBI" id="CHEBI:57597"/>
    </ligand>
</feature>
<feature type="binding site" evidence="1">
    <location>
        <position position="243"/>
    </location>
    <ligand>
        <name>sn-glycerol 3-phosphate</name>
        <dbReference type="ChEBI" id="CHEBI:57597"/>
    </ligand>
</feature>
<feature type="binding site" evidence="1">
    <location>
        <position position="253"/>
    </location>
    <ligand>
        <name>sn-glycerol 3-phosphate</name>
        <dbReference type="ChEBI" id="CHEBI:57597"/>
    </ligand>
</feature>
<feature type="binding site" evidence="1">
    <location>
        <position position="254"/>
    </location>
    <ligand>
        <name>NADPH</name>
        <dbReference type="ChEBI" id="CHEBI:57783"/>
    </ligand>
</feature>
<feature type="binding site" evidence="1">
    <location>
        <position position="254"/>
    </location>
    <ligand>
        <name>sn-glycerol 3-phosphate</name>
        <dbReference type="ChEBI" id="CHEBI:57597"/>
    </ligand>
</feature>
<feature type="binding site" evidence="1">
    <location>
        <position position="255"/>
    </location>
    <ligand>
        <name>sn-glycerol 3-phosphate</name>
        <dbReference type="ChEBI" id="CHEBI:57597"/>
    </ligand>
</feature>
<feature type="binding site" evidence="1">
    <location>
        <position position="278"/>
    </location>
    <ligand>
        <name>NADPH</name>
        <dbReference type="ChEBI" id="CHEBI:57783"/>
    </ligand>
</feature>
<feature type="binding site" evidence="1">
    <location>
        <position position="280"/>
    </location>
    <ligand>
        <name>NADPH</name>
        <dbReference type="ChEBI" id="CHEBI:57783"/>
    </ligand>
</feature>
<organism>
    <name type="scientific">Solidesulfovibrio magneticus (strain ATCC 700980 / DSM 13731 / RS-1)</name>
    <name type="common">Desulfovibrio magneticus</name>
    <dbReference type="NCBI Taxonomy" id="573370"/>
    <lineage>
        <taxon>Bacteria</taxon>
        <taxon>Pseudomonadati</taxon>
        <taxon>Thermodesulfobacteriota</taxon>
        <taxon>Desulfovibrionia</taxon>
        <taxon>Desulfovibrionales</taxon>
        <taxon>Desulfovibrionaceae</taxon>
        <taxon>Solidesulfovibrio</taxon>
    </lineage>
</organism>
<comment type="function">
    <text evidence="1">Catalyzes the reduction of the glycolytic intermediate dihydroxyacetone phosphate (DHAP) to sn-glycerol 3-phosphate (G3P), the key precursor for phospholipid synthesis.</text>
</comment>
<comment type="catalytic activity">
    <reaction evidence="1">
        <text>sn-glycerol 3-phosphate + NAD(+) = dihydroxyacetone phosphate + NADH + H(+)</text>
        <dbReference type="Rhea" id="RHEA:11092"/>
        <dbReference type="ChEBI" id="CHEBI:15378"/>
        <dbReference type="ChEBI" id="CHEBI:57540"/>
        <dbReference type="ChEBI" id="CHEBI:57597"/>
        <dbReference type="ChEBI" id="CHEBI:57642"/>
        <dbReference type="ChEBI" id="CHEBI:57945"/>
        <dbReference type="EC" id="1.1.1.94"/>
    </reaction>
    <physiologicalReaction direction="right-to-left" evidence="1">
        <dbReference type="Rhea" id="RHEA:11094"/>
    </physiologicalReaction>
</comment>
<comment type="catalytic activity">
    <reaction evidence="1">
        <text>sn-glycerol 3-phosphate + NADP(+) = dihydroxyacetone phosphate + NADPH + H(+)</text>
        <dbReference type="Rhea" id="RHEA:11096"/>
        <dbReference type="ChEBI" id="CHEBI:15378"/>
        <dbReference type="ChEBI" id="CHEBI:57597"/>
        <dbReference type="ChEBI" id="CHEBI:57642"/>
        <dbReference type="ChEBI" id="CHEBI:57783"/>
        <dbReference type="ChEBI" id="CHEBI:58349"/>
        <dbReference type="EC" id="1.1.1.94"/>
    </reaction>
    <physiologicalReaction direction="right-to-left" evidence="1">
        <dbReference type="Rhea" id="RHEA:11098"/>
    </physiologicalReaction>
</comment>
<comment type="pathway">
    <text evidence="1">Membrane lipid metabolism; glycerophospholipid metabolism.</text>
</comment>
<comment type="subcellular location">
    <subcellularLocation>
        <location evidence="1">Cytoplasm</location>
    </subcellularLocation>
</comment>
<comment type="similarity">
    <text evidence="1">Belongs to the NAD-dependent glycerol-3-phosphate dehydrogenase family.</text>
</comment>
<keyword id="KW-0963">Cytoplasm</keyword>
<keyword id="KW-0444">Lipid biosynthesis</keyword>
<keyword id="KW-0443">Lipid metabolism</keyword>
<keyword id="KW-0520">NAD</keyword>
<keyword id="KW-0521">NADP</keyword>
<keyword id="KW-0547">Nucleotide-binding</keyword>
<keyword id="KW-0560">Oxidoreductase</keyword>
<keyword id="KW-0594">Phospholipid biosynthesis</keyword>
<keyword id="KW-1208">Phospholipid metabolism</keyword>
<gene>
    <name evidence="1" type="primary">gpsA</name>
    <name type="ordered locus">DMR_11830</name>
</gene>
<name>GPDA_SOLM1</name>
<accession>C4XLT6</accession>